<accession>B4F1G5</accession>
<proteinExistence type="inferred from homology"/>
<evidence type="ECO:0000255" key="1">
    <source>
        <dbReference type="HAMAP-Rule" id="MF_01576"/>
    </source>
</evidence>
<gene>
    <name evidence="1" type="primary">folD</name>
    <name type="ordered locus">PMI2155</name>
</gene>
<name>FOLD_PROMH</name>
<feature type="chain" id="PRO_1000147510" description="Bifunctional protein FolD">
    <location>
        <begin position="1"/>
        <end position="290"/>
    </location>
</feature>
<feature type="binding site" evidence="1">
    <location>
        <begin position="166"/>
        <end position="168"/>
    </location>
    <ligand>
        <name>NADP(+)</name>
        <dbReference type="ChEBI" id="CHEBI:58349"/>
    </ligand>
</feature>
<feature type="binding site" evidence="1">
    <location>
        <position position="232"/>
    </location>
    <ligand>
        <name>NADP(+)</name>
        <dbReference type="ChEBI" id="CHEBI:58349"/>
    </ligand>
</feature>
<dbReference type="EC" id="1.5.1.5" evidence="1"/>
<dbReference type="EC" id="3.5.4.9" evidence="1"/>
<dbReference type="EMBL" id="AM942759">
    <property type="protein sequence ID" value="CAR44291.1"/>
    <property type="molecule type" value="Genomic_DNA"/>
</dbReference>
<dbReference type="RefSeq" id="WP_004244243.1">
    <property type="nucleotide sequence ID" value="NC_010554.1"/>
</dbReference>
<dbReference type="SMR" id="B4F1G5"/>
<dbReference type="EnsemblBacteria" id="CAR44291">
    <property type="protein sequence ID" value="CAR44291"/>
    <property type="gene ID" value="PMI2155"/>
</dbReference>
<dbReference type="GeneID" id="6801506"/>
<dbReference type="KEGG" id="pmr:PMI2155"/>
<dbReference type="eggNOG" id="COG0190">
    <property type="taxonomic scope" value="Bacteria"/>
</dbReference>
<dbReference type="HOGENOM" id="CLU_034045_2_1_6"/>
<dbReference type="UniPathway" id="UPA00193"/>
<dbReference type="Proteomes" id="UP000008319">
    <property type="component" value="Chromosome"/>
</dbReference>
<dbReference type="GO" id="GO:0005829">
    <property type="term" value="C:cytosol"/>
    <property type="evidence" value="ECO:0007669"/>
    <property type="project" value="TreeGrafter"/>
</dbReference>
<dbReference type="GO" id="GO:0004477">
    <property type="term" value="F:methenyltetrahydrofolate cyclohydrolase activity"/>
    <property type="evidence" value="ECO:0007669"/>
    <property type="project" value="UniProtKB-UniRule"/>
</dbReference>
<dbReference type="GO" id="GO:0004488">
    <property type="term" value="F:methylenetetrahydrofolate dehydrogenase (NADP+) activity"/>
    <property type="evidence" value="ECO:0007669"/>
    <property type="project" value="UniProtKB-UniRule"/>
</dbReference>
<dbReference type="GO" id="GO:0000105">
    <property type="term" value="P:L-histidine biosynthetic process"/>
    <property type="evidence" value="ECO:0007669"/>
    <property type="project" value="UniProtKB-KW"/>
</dbReference>
<dbReference type="GO" id="GO:0009086">
    <property type="term" value="P:methionine biosynthetic process"/>
    <property type="evidence" value="ECO:0007669"/>
    <property type="project" value="UniProtKB-KW"/>
</dbReference>
<dbReference type="GO" id="GO:0006164">
    <property type="term" value="P:purine nucleotide biosynthetic process"/>
    <property type="evidence" value="ECO:0007669"/>
    <property type="project" value="UniProtKB-KW"/>
</dbReference>
<dbReference type="GO" id="GO:0035999">
    <property type="term" value="P:tetrahydrofolate interconversion"/>
    <property type="evidence" value="ECO:0007669"/>
    <property type="project" value="UniProtKB-UniRule"/>
</dbReference>
<dbReference type="CDD" id="cd01080">
    <property type="entry name" value="NAD_bind_m-THF_DH_Cyclohyd"/>
    <property type="match status" value="1"/>
</dbReference>
<dbReference type="FunFam" id="3.40.50.10860:FF:000001">
    <property type="entry name" value="Bifunctional protein FolD"/>
    <property type="match status" value="1"/>
</dbReference>
<dbReference type="FunFam" id="3.40.50.720:FF:000006">
    <property type="entry name" value="Bifunctional protein FolD"/>
    <property type="match status" value="1"/>
</dbReference>
<dbReference type="Gene3D" id="3.40.50.10860">
    <property type="entry name" value="Leucine Dehydrogenase, chain A, domain 1"/>
    <property type="match status" value="1"/>
</dbReference>
<dbReference type="Gene3D" id="3.40.50.720">
    <property type="entry name" value="NAD(P)-binding Rossmann-like Domain"/>
    <property type="match status" value="1"/>
</dbReference>
<dbReference type="HAMAP" id="MF_01576">
    <property type="entry name" value="THF_DHG_CYH"/>
    <property type="match status" value="1"/>
</dbReference>
<dbReference type="InterPro" id="IPR046346">
    <property type="entry name" value="Aminoacid_DH-like_N_sf"/>
</dbReference>
<dbReference type="InterPro" id="IPR036291">
    <property type="entry name" value="NAD(P)-bd_dom_sf"/>
</dbReference>
<dbReference type="InterPro" id="IPR000672">
    <property type="entry name" value="THF_DH/CycHdrlase"/>
</dbReference>
<dbReference type="InterPro" id="IPR020630">
    <property type="entry name" value="THF_DH/CycHdrlase_cat_dom"/>
</dbReference>
<dbReference type="InterPro" id="IPR020867">
    <property type="entry name" value="THF_DH/CycHdrlase_CS"/>
</dbReference>
<dbReference type="InterPro" id="IPR020631">
    <property type="entry name" value="THF_DH/CycHdrlase_NAD-bd_dom"/>
</dbReference>
<dbReference type="NCBIfam" id="NF008058">
    <property type="entry name" value="PRK10792.1"/>
    <property type="match status" value="1"/>
</dbReference>
<dbReference type="NCBIfam" id="NF010783">
    <property type="entry name" value="PRK14186.1"/>
    <property type="match status" value="1"/>
</dbReference>
<dbReference type="PANTHER" id="PTHR48099:SF5">
    <property type="entry name" value="C-1-TETRAHYDROFOLATE SYNTHASE, CYTOPLASMIC"/>
    <property type="match status" value="1"/>
</dbReference>
<dbReference type="PANTHER" id="PTHR48099">
    <property type="entry name" value="C-1-TETRAHYDROFOLATE SYNTHASE, CYTOPLASMIC-RELATED"/>
    <property type="match status" value="1"/>
</dbReference>
<dbReference type="Pfam" id="PF00763">
    <property type="entry name" value="THF_DHG_CYH"/>
    <property type="match status" value="1"/>
</dbReference>
<dbReference type="Pfam" id="PF02882">
    <property type="entry name" value="THF_DHG_CYH_C"/>
    <property type="match status" value="1"/>
</dbReference>
<dbReference type="PRINTS" id="PR00085">
    <property type="entry name" value="THFDHDRGNASE"/>
</dbReference>
<dbReference type="SUPFAM" id="SSF53223">
    <property type="entry name" value="Aminoacid dehydrogenase-like, N-terminal domain"/>
    <property type="match status" value="1"/>
</dbReference>
<dbReference type="SUPFAM" id="SSF51735">
    <property type="entry name" value="NAD(P)-binding Rossmann-fold domains"/>
    <property type="match status" value="1"/>
</dbReference>
<dbReference type="PROSITE" id="PS00766">
    <property type="entry name" value="THF_DHG_CYH_1"/>
    <property type="match status" value="1"/>
</dbReference>
<dbReference type="PROSITE" id="PS00767">
    <property type="entry name" value="THF_DHG_CYH_2"/>
    <property type="match status" value="1"/>
</dbReference>
<sequence length="290" mass="31386">MSARIIDGKTIAQTIRSEVAEKVKQRIKIGKRAPGLAVILVGDNPASQIYVASKRKACDEVGFISRSYDLPDTTSEADLLNLIDTLNEDNTIDGILVQLPLPAGIDNVKVLERIHPDKDVDGFHPYNIGRLCQRAPKLRPCTPRGIVTLLERCNIPMNGLNAVIIGASNIVGRPMSLELLLAGCTTTVTHRFTKDLRFHVEHADLVVVAVGKPNFIPGEWIKPGAIVIDVGINRLENGKVVGDVDFAQASQRAGWISPVPGGVGPMTVATLIQNTLQACEEYHDPDIGNN</sequence>
<keyword id="KW-0028">Amino-acid biosynthesis</keyword>
<keyword id="KW-0368">Histidine biosynthesis</keyword>
<keyword id="KW-0378">Hydrolase</keyword>
<keyword id="KW-0486">Methionine biosynthesis</keyword>
<keyword id="KW-0511">Multifunctional enzyme</keyword>
<keyword id="KW-0521">NADP</keyword>
<keyword id="KW-0554">One-carbon metabolism</keyword>
<keyword id="KW-0560">Oxidoreductase</keyword>
<keyword id="KW-0658">Purine biosynthesis</keyword>
<keyword id="KW-1185">Reference proteome</keyword>
<comment type="function">
    <text evidence="1">Catalyzes the oxidation of 5,10-methylenetetrahydrofolate to 5,10-methenyltetrahydrofolate and then the hydrolysis of 5,10-methenyltetrahydrofolate to 10-formyltetrahydrofolate.</text>
</comment>
<comment type="catalytic activity">
    <reaction evidence="1">
        <text>(6R)-5,10-methylene-5,6,7,8-tetrahydrofolate + NADP(+) = (6R)-5,10-methenyltetrahydrofolate + NADPH</text>
        <dbReference type="Rhea" id="RHEA:22812"/>
        <dbReference type="ChEBI" id="CHEBI:15636"/>
        <dbReference type="ChEBI" id="CHEBI:57455"/>
        <dbReference type="ChEBI" id="CHEBI:57783"/>
        <dbReference type="ChEBI" id="CHEBI:58349"/>
        <dbReference type="EC" id="1.5.1.5"/>
    </reaction>
</comment>
<comment type="catalytic activity">
    <reaction evidence="1">
        <text>(6R)-5,10-methenyltetrahydrofolate + H2O = (6R)-10-formyltetrahydrofolate + H(+)</text>
        <dbReference type="Rhea" id="RHEA:23700"/>
        <dbReference type="ChEBI" id="CHEBI:15377"/>
        <dbReference type="ChEBI" id="CHEBI:15378"/>
        <dbReference type="ChEBI" id="CHEBI:57455"/>
        <dbReference type="ChEBI" id="CHEBI:195366"/>
        <dbReference type="EC" id="3.5.4.9"/>
    </reaction>
</comment>
<comment type="pathway">
    <text evidence="1">One-carbon metabolism; tetrahydrofolate interconversion.</text>
</comment>
<comment type="subunit">
    <text evidence="1">Homodimer.</text>
</comment>
<comment type="similarity">
    <text evidence="1">Belongs to the tetrahydrofolate dehydrogenase/cyclohydrolase family.</text>
</comment>
<reference key="1">
    <citation type="journal article" date="2008" name="J. Bacteriol.">
        <title>Complete genome sequence of uropathogenic Proteus mirabilis, a master of both adherence and motility.</title>
        <authorList>
            <person name="Pearson M.M."/>
            <person name="Sebaihia M."/>
            <person name="Churcher C."/>
            <person name="Quail M.A."/>
            <person name="Seshasayee A.S."/>
            <person name="Luscombe N.M."/>
            <person name="Abdellah Z."/>
            <person name="Arrosmith C."/>
            <person name="Atkin B."/>
            <person name="Chillingworth T."/>
            <person name="Hauser H."/>
            <person name="Jagels K."/>
            <person name="Moule S."/>
            <person name="Mungall K."/>
            <person name="Norbertczak H."/>
            <person name="Rabbinowitsch E."/>
            <person name="Walker D."/>
            <person name="Whithead S."/>
            <person name="Thomson N.R."/>
            <person name="Rather P.N."/>
            <person name="Parkhill J."/>
            <person name="Mobley H.L.T."/>
        </authorList>
    </citation>
    <scope>NUCLEOTIDE SEQUENCE [LARGE SCALE GENOMIC DNA]</scope>
    <source>
        <strain>HI4320</strain>
    </source>
</reference>
<protein>
    <recommendedName>
        <fullName evidence="1">Bifunctional protein FolD</fullName>
    </recommendedName>
    <domain>
        <recommendedName>
            <fullName evidence="1">Methylenetetrahydrofolate dehydrogenase</fullName>
            <ecNumber evidence="1">1.5.1.5</ecNumber>
        </recommendedName>
    </domain>
    <domain>
        <recommendedName>
            <fullName evidence="1">Methenyltetrahydrofolate cyclohydrolase</fullName>
            <ecNumber evidence="1">3.5.4.9</ecNumber>
        </recommendedName>
    </domain>
</protein>
<organism>
    <name type="scientific">Proteus mirabilis (strain HI4320)</name>
    <dbReference type="NCBI Taxonomy" id="529507"/>
    <lineage>
        <taxon>Bacteria</taxon>
        <taxon>Pseudomonadati</taxon>
        <taxon>Pseudomonadota</taxon>
        <taxon>Gammaproteobacteria</taxon>
        <taxon>Enterobacterales</taxon>
        <taxon>Morganellaceae</taxon>
        <taxon>Proteus</taxon>
    </lineage>
</organism>